<evidence type="ECO:0000250" key="1"/>
<evidence type="ECO:0000250" key="2">
    <source>
        <dbReference type="UniProtKB" id="P01730"/>
    </source>
</evidence>
<evidence type="ECO:0000255" key="3"/>
<evidence type="ECO:0000255" key="4">
    <source>
        <dbReference type="PROSITE-ProRule" id="PRU00114"/>
    </source>
</evidence>
<feature type="signal peptide" evidence="3">
    <location>
        <begin position="1"/>
        <end position="25"/>
    </location>
</feature>
<feature type="chain" id="PRO_0000014628" description="T-cell surface glycoprotein CD4">
    <location>
        <begin position="26"/>
        <end position="459"/>
    </location>
</feature>
<feature type="topological domain" description="Extracellular" evidence="3">
    <location>
        <begin position="26"/>
        <end position="396"/>
    </location>
</feature>
<feature type="transmembrane region" description="Helical" evidence="3">
    <location>
        <begin position="397"/>
        <end position="419"/>
    </location>
</feature>
<feature type="topological domain" description="Cytoplasmic" evidence="3">
    <location>
        <begin position="420"/>
        <end position="459"/>
    </location>
</feature>
<feature type="domain" description="Ig-like V-type">
    <location>
        <begin position="26"/>
        <end position="129"/>
    </location>
</feature>
<feature type="domain" description="Ig-like C2-type 1">
    <location>
        <begin position="130"/>
        <end position="208"/>
    </location>
</feature>
<feature type="domain" description="Ig-like C2-type 2">
    <location>
        <begin position="209"/>
        <end position="318"/>
    </location>
</feature>
<feature type="domain" description="Ig-like C2-type 3">
    <location>
        <begin position="319"/>
        <end position="374"/>
    </location>
</feature>
<feature type="modified residue" description="Phosphoserine" evidence="2">
    <location>
        <position position="434"/>
    </location>
</feature>
<feature type="modified residue" description="Phosphoserine" evidence="2">
    <location>
        <position position="441"/>
    </location>
</feature>
<feature type="lipid moiety-binding region" description="S-palmitoyl cysteine" evidence="1">
    <location>
        <position position="420"/>
    </location>
</feature>
<feature type="lipid moiety-binding region" description="S-palmitoyl cysteine" evidence="1">
    <location>
        <position position="423"/>
    </location>
</feature>
<feature type="glycosylation site" description="N-linked (GlcNAc...) asparagine" evidence="3">
    <location>
        <position position="299"/>
    </location>
</feature>
<feature type="disulfide bond" evidence="4">
    <location>
        <begin position="41"/>
        <end position="113"/>
    </location>
</feature>
<feature type="disulfide bond" evidence="4">
    <location>
        <begin position="329"/>
        <end position="370"/>
    </location>
</feature>
<name>CD4_RABIT</name>
<sequence>MNRRIYFQCLLLVLPLALLPAATWGKTVVRGKAGAIVELPCQSSQKRNSVFNWKHANQVKILGNQGSSSSSFWLKGNSPLSNRVESKKNMWDQGSFPLVIKDLRMDDSGTYICEVGDKKMEVELLVFRLTANPNTRLLHGQSLTLTLEGPSVGSPSVQWKSPENKIIETGPTCSMPKLRLQDSGTWSCHLSFQDQNKLELDIKIIVLGFPKASATVYKKEGEQVEFSFPLNFEDESLSGELMWQVDGASSAQSWVSFSLEDRKVSVQKILPDLKIQMSKGLPLSLTLPQALHRYAGSGNLSLTLDKGKLHQQVSLVMLKVTQVKNKLTCEVLGPIDPKMKLSLKLEDQEAKVSTQKMVQVLDPKAGTWQCLLSSGDQVLLESKADVLATGLSHQQPTLLAGALGGTAGLVLFAGLCIYCCVKCRHRRHQAQRMSQIKKLLSEKKTCQCPHRLQKTYNLL</sequence>
<comment type="function">
    <text evidence="2">Integral membrane glycoprotein that plays an essential role in the immune response and serves multiple functions in responses against both external and internal offenses. In T-cells, functions primarily as a coreceptor for MHC class II molecule:peptide complex. The antigens presented by class II peptides are derived from extracellular proteins while class I peptides are derived from cytosolic proteins. Interacts simultaneously with the T-cell receptor (TCR) and the MHC class II presented by antigen presenting cells (APCs). In turn, recruits the Src kinase LCK to the vicinity of the TCR-CD3 complex. LCK then initiates different intracellular signaling pathways by phosphorylating various substrates ultimately leading to lymphokine production, motility, adhesion and activation of T-helper cells. In other cells such as macrophages or NK cells, plays a role in differentiation/activation, cytokine expression and cell migration in a TCR/LCK-independent pathway. Participates in the development of T-helper cells in the thymus and triggers the differentiation of monocytes into functional mature macrophages.</text>
</comment>
<comment type="subunit">
    <text evidence="2">Forms disulfide-linked homodimers at the cell surface. Interacts with LCK. Interacts with PTK2/FAK1. Binds to P4HB/PDI. Interacts with IL16; this interaction induces a CD4-dependent signaling in lymphocytes. Interacts (via Ig-like V-type domain) with MHCII alpha chain (via alpha-2 domain) and beta chain (via beta-2 domain); this interaction increases the affinity of TCR for peptide-MHCII. CD4 oligomerization via Ig-like C2-type 2 and 3 domains appears to be required for stable binding to MHCII and adhesion between T cells and APCs.</text>
</comment>
<comment type="subcellular location">
    <subcellularLocation>
        <location evidence="2">Cell membrane</location>
        <topology evidence="2">Single-pass type I membrane protein</topology>
    </subcellularLocation>
    <text evidence="2">Localizes to lipid rafts.</text>
</comment>
<comment type="domain">
    <text evidence="2">The Ig-like V-type domain mediates the interaction with MHCII.</text>
</comment>
<comment type="PTM">
    <text evidence="2">Palmitoylation and association with LCK contribute to the enrichment of CD4 in lipid rafts.</text>
</comment>
<comment type="PTM">
    <text evidence="2">Phosphorylated by PKC; phosphorylation plays an important role for CD4 internalization.</text>
</comment>
<accession>P46630</accession>
<gene>
    <name type="primary">CD4</name>
</gene>
<keyword id="KW-1064">Adaptive immunity</keyword>
<keyword id="KW-1003">Cell membrane</keyword>
<keyword id="KW-1015">Disulfide bond</keyword>
<keyword id="KW-0325">Glycoprotein</keyword>
<keyword id="KW-0391">Immunity</keyword>
<keyword id="KW-0393">Immunoglobulin domain</keyword>
<keyword id="KW-0449">Lipoprotein</keyword>
<keyword id="KW-0472">Membrane</keyword>
<keyword id="KW-0564">Palmitate</keyword>
<keyword id="KW-0597">Phosphoprotein</keyword>
<keyword id="KW-1185">Reference proteome</keyword>
<keyword id="KW-0677">Repeat</keyword>
<keyword id="KW-0732">Signal</keyword>
<keyword id="KW-0812">Transmembrane</keyword>
<keyword id="KW-1133">Transmembrane helix</keyword>
<proteinExistence type="evidence at transcript level"/>
<dbReference type="EMBL" id="M92840">
    <property type="protein sequence ID" value="AAA31198.1"/>
    <property type="molecule type" value="mRNA"/>
</dbReference>
<dbReference type="PIR" id="A46254">
    <property type="entry name" value="A46254"/>
</dbReference>
<dbReference type="RefSeq" id="NP_001075782.1">
    <property type="nucleotide sequence ID" value="NM_001082313.2"/>
</dbReference>
<dbReference type="SMR" id="P46630"/>
<dbReference type="FunCoup" id="P46630">
    <property type="interactions" value="80"/>
</dbReference>
<dbReference type="STRING" id="9986.ENSOCUP00000030708"/>
<dbReference type="GlyCosmos" id="P46630">
    <property type="glycosylation" value="1 site, No reported glycans"/>
</dbReference>
<dbReference type="PaxDb" id="9986-ENSOCUP00000011113"/>
<dbReference type="GeneID" id="100009152"/>
<dbReference type="KEGG" id="ocu:100009152"/>
<dbReference type="CTD" id="920"/>
<dbReference type="eggNOG" id="ENOG502S0W5">
    <property type="taxonomic scope" value="Eukaryota"/>
</dbReference>
<dbReference type="InParanoid" id="P46630"/>
<dbReference type="OrthoDB" id="8657369at2759"/>
<dbReference type="Proteomes" id="UP000001811">
    <property type="component" value="Unplaced"/>
</dbReference>
<dbReference type="GO" id="GO:0009986">
    <property type="term" value="C:cell surface"/>
    <property type="evidence" value="ECO:0007669"/>
    <property type="project" value="UniProtKB-ARBA"/>
</dbReference>
<dbReference type="GO" id="GO:0005886">
    <property type="term" value="C:plasma membrane"/>
    <property type="evidence" value="ECO:0007669"/>
    <property type="project" value="UniProtKB-SubCell"/>
</dbReference>
<dbReference type="GO" id="GO:0015026">
    <property type="term" value="F:coreceptor activity"/>
    <property type="evidence" value="ECO:0007669"/>
    <property type="project" value="InterPro"/>
</dbReference>
<dbReference type="GO" id="GO:0023026">
    <property type="term" value="F:MHC class II protein complex binding"/>
    <property type="evidence" value="ECO:0000250"/>
    <property type="project" value="UniProtKB"/>
</dbReference>
<dbReference type="GO" id="GO:0002250">
    <property type="term" value="P:adaptive immune response"/>
    <property type="evidence" value="ECO:0007669"/>
    <property type="project" value="UniProtKB-KW"/>
</dbReference>
<dbReference type="GO" id="GO:0007155">
    <property type="term" value="P:cell adhesion"/>
    <property type="evidence" value="ECO:0007669"/>
    <property type="project" value="InterPro"/>
</dbReference>
<dbReference type="GO" id="GO:0030217">
    <property type="term" value="P:T cell differentiation"/>
    <property type="evidence" value="ECO:0000250"/>
    <property type="project" value="UniProtKB"/>
</dbReference>
<dbReference type="GO" id="GO:0045058">
    <property type="term" value="P:T cell selection"/>
    <property type="evidence" value="ECO:0000250"/>
    <property type="project" value="UniProtKB"/>
</dbReference>
<dbReference type="CDD" id="cd22570">
    <property type="entry name" value="CD4_CD"/>
    <property type="match status" value="1"/>
</dbReference>
<dbReference type="FunFam" id="1.20.5.900:FF:000001">
    <property type="entry name" value="T-cell surface glycoprotein CD4"/>
    <property type="match status" value="1"/>
</dbReference>
<dbReference type="FunFam" id="2.60.40.10:FF:001105">
    <property type="entry name" value="T-cell surface glycoprotein CD4"/>
    <property type="match status" value="1"/>
</dbReference>
<dbReference type="FunFam" id="2.60.40.10:FF:001221">
    <property type="entry name" value="T-cell surface glycoprotein CD4"/>
    <property type="match status" value="1"/>
</dbReference>
<dbReference type="FunFam" id="2.60.40.10:FF:001253">
    <property type="entry name" value="T-cell surface glycoprotein CD4"/>
    <property type="match status" value="1"/>
</dbReference>
<dbReference type="Gene3D" id="2.60.40.10">
    <property type="entry name" value="Immunoglobulins"/>
    <property type="match status" value="4"/>
</dbReference>
<dbReference type="Gene3D" id="1.20.5.900">
    <property type="entry name" value="transmembrane domain of human cd4"/>
    <property type="match status" value="1"/>
</dbReference>
<dbReference type="InterPro" id="IPR000973">
    <property type="entry name" value="CD4"/>
</dbReference>
<dbReference type="InterPro" id="IPR015274">
    <property type="entry name" value="CD4-extracel"/>
</dbReference>
<dbReference type="InterPro" id="IPR007110">
    <property type="entry name" value="Ig-like_dom"/>
</dbReference>
<dbReference type="InterPro" id="IPR036179">
    <property type="entry name" value="Ig-like_dom_sf"/>
</dbReference>
<dbReference type="InterPro" id="IPR013783">
    <property type="entry name" value="Ig-like_fold"/>
</dbReference>
<dbReference type="InterPro" id="IPR008424">
    <property type="entry name" value="Ig_C2-set"/>
</dbReference>
<dbReference type="InterPro" id="IPR003599">
    <property type="entry name" value="Ig_sub"/>
</dbReference>
<dbReference type="InterPro" id="IPR013106">
    <property type="entry name" value="Ig_V-set"/>
</dbReference>
<dbReference type="InterPro" id="IPR013151">
    <property type="entry name" value="Immunoglobulin_dom"/>
</dbReference>
<dbReference type="InterPro" id="IPR021963">
    <property type="entry name" value="Tcell_CD4_Cterm"/>
</dbReference>
<dbReference type="PANTHER" id="PTHR11422">
    <property type="entry name" value="T-CELL SURFACE GLYCOPROTEIN CD4"/>
    <property type="match status" value="1"/>
</dbReference>
<dbReference type="PANTHER" id="PTHR11422:SF0">
    <property type="entry name" value="T-CELL SURFACE GLYCOPROTEIN CD4"/>
    <property type="match status" value="1"/>
</dbReference>
<dbReference type="Pfam" id="PF05790">
    <property type="entry name" value="C2-set"/>
    <property type="match status" value="2"/>
</dbReference>
<dbReference type="Pfam" id="PF09191">
    <property type="entry name" value="CD4-extracel"/>
    <property type="match status" value="1"/>
</dbReference>
<dbReference type="Pfam" id="PF00047">
    <property type="entry name" value="ig"/>
    <property type="match status" value="1"/>
</dbReference>
<dbReference type="Pfam" id="PF12104">
    <property type="entry name" value="Tcell_CD4_C"/>
    <property type="match status" value="1"/>
</dbReference>
<dbReference type="PRINTS" id="PR00692">
    <property type="entry name" value="CD4TCANTIGEN"/>
</dbReference>
<dbReference type="SMART" id="SM00409">
    <property type="entry name" value="IG"/>
    <property type="match status" value="3"/>
</dbReference>
<dbReference type="SMART" id="SM00406">
    <property type="entry name" value="IGv"/>
    <property type="match status" value="1"/>
</dbReference>
<dbReference type="SUPFAM" id="SSF48726">
    <property type="entry name" value="Immunoglobulin"/>
    <property type="match status" value="4"/>
</dbReference>
<dbReference type="PROSITE" id="PS50835">
    <property type="entry name" value="IG_LIKE"/>
    <property type="match status" value="1"/>
</dbReference>
<organism>
    <name type="scientific">Oryctolagus cuniculus</name>
    <name type="common">Rabbit</name>
    <dbReference type="NCBI Taxonomy" id="9986"/>
    <lineage>
        <taxon>Eukaryota</taxon>
        <taxon>Metazoa</taxon>
        <taxon>Chordata</taxon>
        <taxon>Craniata</taxon>
        <taxon>Vertebrata</taxon>
        <taxon>Euteleostomi</taxon>
        <taxon>Mammalia</taxon>
        <taxon>Eutheria</taxon>
        <taxon>Euarchontoglires</taxon>
        <taxon>Glires</taxon>
        <taxon>Lagomorpha</taxon>
        <taxon>Leporidae</taxon>
        <taxon>Oryctolagus</taxon>
    </lineage>
</organism>
<protein>
    <recommendedName>
        <fullName>T-cell surface glycoprotein CD4</fullName>
    </recommendedName>
    <alternativeName>
        <fullName>T-cell surface antigen T4/Leu-3</fullName>
    </alternativeName>
    <cdAntigenName>CD4</cdAntigenName>
</protein>
<reference key="1">
    <citation type="journal article" date="1992" name="Proc. Natl. Acad. Sci. U.S.A.">
        <title>CD4 and its role in infection of rabbit cell lines by human immunodeficiency virus type 1.</title>
        <authorList>
            <person name="Hague B.F."/>
            <person name="Sawasdikosol S."/>
            <person name="Brown T.J."/>
            <person name="Lee K."/>
            <person name="Recker D.P."/>
            <person name="Kindt T.J."/>
        </authorList>
    </citation>
    <scope>NUCLEOTIDE SEQUENCE [MRNA]</scope>
</reference>